<proteinExistence type="inferred from homology"/>
<sequence>MPTNNQLVRCGRKSKIRASKSPALNGNPFAKGVCVLVKTITPRKPNSALRKMARVRFRNGTCVNAYIPGEGHNLQEHSTVLVRGGRVPDLPGVRYHIVRGVYDTQGVKNRKQGRSRYGTKRPK</sequence>
<gene>
    <name evidence="2" type="primary">rpsL</name>
    <name type="ordered locus">OTBS_1782</name>
</gene>
<evidence type="ECO:0000250" key="1"/>
<evidence type="ECO:0000255" key="2">
    <source>
        <dbReference type="HAMAP-Rule" id="MF_00403"/>
    </source>
</evidence>
<evidence type="ECO:0000305" key="3"/>
<organism>
    <name type="scientific">Orientia tsutsugamushi (strain Boryong)</name>
    <name type="common">Rickettsia tsutsugamushi</name>
    <dbReference type="NCBI Taxonomy" id="357244"/>
    <lineage>
        <taxon>Bacteria</taxon>
        <taxon>Pseudomonadati</taxon>
        <taxon>Pseudomonadota</taxon>
        <taxon>Alphaproteobacteria</taxon>
        <taxon>Rickettsiales</taxon>
        <taxon>Rickettsiaceae</taxon>
        <taxon>Rickettsieae</taxon>
        <taxon>Orientia</taxon>
    </lineage>
</organism>
<dbReference type="EMBL" id="AM494475">
    <property type="protein sequence ID" value="CAM80877.1"/>
    <property type="molecule type" value="Genomic_DNA"/>
</dbReference>
<dbReference type="RefSeq" id="WP_011945043.1">
    <property type="nucleotide sequence ID" value="NC_009488.1"/>
</dbReference>
<dbReference type="SMR" id="A5CF21"/>
<dbReference type="KEGG" id="ots:OTBS_1782"/>
<dbReference type="eggNOG" id="COG0048">
    <property type="taxonomic scope" value="Bacteria"/>
</dbReference>
<dbReference type="HOGENOM" id="CLU_104295_1_2_5"/>
<dbReference type="Proteomes" id="UP000001565">
    <property type="component" value="Chromosome"/>
</dbReference>
<dbReference type="GO" id="GO:0015935">
    <property type="term" value="C:small ribosomal subunit"/>
    <property type="evidence" value="ECO:0007669"/>
    <property type="project" value="InterPro"/>
</dbReference>
<dbReference type="GO" id="GO:0019843">
    <property type="term" value="F:rRNA binding"/>
    <property type="evidence" value="ECO:0007669"/>
    <property type="project" value="UniProtKB-UniRule"/>
</dbReference>
<dbReference type="GO" id="GO:0003735">
    <property type="term" value="F:structural constituent of ribosome"/>
    <property type="evidence" value="ECO:0007669"/>
    <property type="project" value="InterPro"/>
</dbReference>
<dbReference type="GO" id="GO:0000049">
    <property type="term" value="F:tRNA binding"/>
    <property type="evidence" value="ECO:0007669"/>
    <property type="project" value="UniProtKB-UniRule"/>
</dbReference>
<dbReference type="GO" id="GO:0006412">
    <property type="term" value="P:translation"/>
    <property type="evidence" value="ECO:0007669"/>
    <property type="project" value="UniProtKB-UniRule"/>
</dbReference>
<dbReference type="CDD" id="cd03368">
    <property type="entry name" value="Ribosomal_S12"/>
    <property type="match status" value="1"/>
</dbReference>
<dbReference type="FunFam" id="2.40.50.140:FF:000099">
    <property type="entry name" value="Ribosomal protein S12, mitochondrial"/>
    <property type="match status" value="1"/>
</dbReference>
<dbReference type="Gene3D" id="2.40.50.140">
    <property type="entry name" value="Nucleic acid-binding proteins"/>
    <property type="match status" value="1"/>
</dbReference>
<dbReference type="HAMAP" id="MF_00403_B">
    <property type="entry name" value="Ribosomal_uS12_B"/>
    <property type="match status" value="1"/>
</dbReference>
<dbReference type="InterPro" id="IPR012340">
    <property type="entry name" value="NA-bd_OB-fold"/>
</dbReference>
<dbReference type="InterPro" id="IPR006032">
    <property type="entry name" value="Ribosomal_uS12"/>
</dbReference>
<dbReference type="InterPro" id="IPR005679">
    <property type="entry name" value="Ribosomal_uS12_bac"/>
</dbReference>
<dbReference type="NCBIfam" id="TIGR00981">
    <property type="entry name" value="rpsL_bact"/>
    <property type="match status" value="1"/>
</dbReference>
<dbReference type="PANTHER" id="PTHR11652">
    <property type="entry name" value="30S RIBOSOMAL PROTEIN S12 FAMILY MEMBER"/>
    <property type="match status" value="1"/>
</dbReference>
<dbReference type="Pfam" id="PF00164">
    <property type="entry name" value="Ribosom_S12_S23"/>
    <property type="match status" value="1"/>
</dbReference>
<dbReference type="PIRSF" id="PIRSF002133">
    <property type="entry name" value="Ribosomal_S12/S23"/>
    <property type="match status" value="1"/>
</dbReference>
<dbReference type="PRINTS" id="PR01034">
    <property type="entry name" value="RIBOSOMALS12"/>
</dbReference>
<dbReference type="SUPFAM" id="SSF50249">
    <property type="entry name" value="Nucleic acid-binding proteins"/>
    <property type="match status" value="1"/>
</dbReference>
<dbReference type="PROSITE" id="PS00055">
    <property type="entry name" value="RIBOSOMAL_S12"/>
    <property type="match status" value="1"/>
</dbReference>
<name>RS12_ORITB</name>
<accession>A5CF21</accession>
<protein>
    <recommendedName>
        <fullName evidence="2">Small ribosomal subunit protein uS12</fullName>
    </recommendedName>
    <alternativeName>
        <fullName evidence="3">30S ribosomal protein S12</fullName>
    </alternativeName>
</protein>
<feature type="chain" id="PRO_1000049799" description="Small ribosomal subunit protein uS12">
    <location>
        <begin position="1"/>
        <end position="123"/>
    </location>
</feature>
<feature type="modified residue" description="3-methylthioaspartic acid" evidence="1">
    <location>
        <position position="89"/>
    </location>
</feature>
<reference key="1">
    <citation type="journal article" date="2007" name="Proc. Natl. Acad. Sci. U.S.A.">
        <title>The Orientia tsutsugamushi genome reveals massive proliferation of conjugative type IV secretion system and host-cell interaction genes.</title>
        <authorList>
            <person name="Cho N.-H."/>
            <person name="Kim H.-R."/>
            <person name="Lee J.-H."/>
            <person name="Kim S.-Y."/>
            <person name="Kim J."/>
            <person name="Cha S."/>
            <person name="Kim S.-Y."/>
            <person name="Darby A.C."/>
            <person name="Fuxelius H.-H."/>
            <person name="Yin J."/>
            <person name="Kim J.H."/>
            <person name="Kim J."/>
            <person name="Lee S.J."/>
            <person name="Koh Y.-S."/>
            <person name="Jang W.-J."/>
            <person name="Park K.-H."/>
            <person name="Andersson S.G.E."/>
            <person name="Choi M.-S."/>
            <person name="Kim I.-S."/>
        </authorList>
    </citation>
    <scope>NUCLEOTIDE SEQUENCE [LARGE SCALE GENOMIC DNA]</scope>
    <source>
        <strain>Boryong</strain>
    </source>
</reference>
<keyword id="KW-0488">Methylation</keyword>
<keyword id="KW-1185">Reference proteome</keyword>
<keyword id="KW-0687">Ribonucleoprotein</keyword>
<keyword id="KW-0689">Ribosomal protein</keyword>
<keyword id="KW-0694">RNA-binding</keyword>
<keyword id="KW-0699">rRNA-binding</keyword>
<keyword id="KW-0820">tRNA-binding</keyword>
<comment type="function">
    <text evidence="2">With S4 and S5 plays an important role in translational accuracy.</text>
</comment>
<comment type="function">
    <text evidence="2">Interacts with and stabilizes bases of the 16S rRNA that are involved in tRNA selection in the A site and with the mRNA backbone. Located at the interface of the 30S and 50S subunits, it traverses the body of the 30S subunit contacting proteins on the other side and probably holding the rRNA structure together. The combined cluster of proteins S8, S12 and S17 appears to hold together the shoulder and platform of the 30S subunit.</text>
</comment>
<comment type="subunit">
    <text evidence="2">Part of the 30S ribosomal subunit. Contacts proteins S8 and S17. May interact with IF1 in the 30S initiation complex.</text>
</comment>
<comment type="similarity">
    <text evidence="2">Belongs to the universal ribosomal protein uS12 family.</text>
</comment>